<proteinExistence type="inferred from homology"/>
<accession>Q7VN74</accession>
<dbReference type="EC" id="3.1.3.11" evidence="1"/>
<dbReference type="EMBL" id="AE017143">
    <property type="protein sequence ID" value="AAP95618.1"/>
    <property type="molecule type" value="Genomic_DNA"/>
</dbReference>
<dbReference type="RefSeq" id="WP_010944670.1">
    <property type="nucleotide sequence ID" value="NC_002940.2"/>
</dbReference>
<dbReference type="SMR" id="Q7VN74"/>
<dbReference type="STRING" id="233412.HD_0702"/>
<dbReference type="KEGG" id="hdu:HD_0702"/>
<dbReference type="eggNOG" id="COG0158">
    <property type="taxonomic scope" value="Bacteria"/>
</dbReference>
<dbReference type="HOGENOM" id="CLU_039977_2_2_6"/>
<dbReference type="OrthoDB" id="9806756at2"/>
<dbReference type="UniPathway" id="UPA00138"/>
<dbReference type="Proteomes" id="UP000001022">
    <property type="component" value="Chromosome"/>
</dbReference>
<dbReference type="GO" id="GO:0005829">
    <property type="term" value="C:cytosol"/>
    <property type="evidence" value="ECO:0007669"/>
    <property type="project" value="TreeGrafter"/>
</dbReference>
<dbReference type="GO" id="GO:0042132">
    <property type="term" value="F:fructose 1,6-bisphosphate 1-phosphatase activity"/>
    <property type="evidence" value="ECO:0007669"/>
    <property type="project" value="UniProtKB-UniRule"/>
</dbReference>
<dbReference type="GO" id="GO:0000287">
    <property type="term" value="F:magnesium ion binding"/>
    <property type="evidence" value="ECO:0007669"/>
    <property type="project" value="UniProtKB-UniRule"/>
</dbReference>
<dbReference type="GO" id="GO:0030388">
    <property type="term" value="P:fructose 1,6-bisphosphate metabolic process"/>
    <property type="evidence" value="ECO:0007669"/>
    <property type="project" value="TreeGrafter"/>
</dbReference>
<dbReference type="GO" id="GO:0006002">
    <property type="term" value="P:fructose 6-phosphate metabolic process"/>
    <property type="evidence" value="ECO:0007669"/>
    <property type="project" value="TreeGrafter"/>
</dbReference>
<dbReference type="GO" id="GO:0006000">
    <property type="term" value="P:fructose metabolic process"/>
    <property type="evidence" value="ECO:0007669"/>
    <property type="project" value="TreeGrafter"/>
</dbReference>
<dbReference type="GO" id="GO:0006094">
    <property type="term" value="P:gluconeogenesis"/>
    <property type="evidence" value="ECO:0007669"/>
    <property type="project" value="UniProtKB-UniRule"/>
</dbReference>
<dbReference type="GO" id="GO:0005986">
    <property type="term" value="P:sucrose biosynthetic process"/>
    <property type="evidence" value="ECO:0007669"/>
    <property type="project" value="TreeGrafter"/>
</dbReference>
<dbReference type="CDD" id="cd00354">
    <property type="entry name" value="FBPase"/>
    <property type="match status" value="1"/>
</dbReference>
<dbReference type="FunFam" id="3.30.540.10:FF:000002">
    <property type="entry name" value="Fructose-1,6-bisphosphatase class 1"/>
    <property type="match status" value="1"/>
</dbReference>
<dbReference type="FunFam" id="3.40.190.80:FF:000001">
    <property type="entry name" value="Fructose-1,6-bisphosphatase class 1"/>
    <property type="match status" value="1"/>
</dbReference>
<dbReference type="Gene3D" id="3.40.190.80">
    <property type="match status" value="1"/>
</dbReference>
<dbReference type="Gene3D" id="3.30.540.10">
    <property type="entry name" value="Fructose-1,6-Bisphosphatase, subunit A, domain 1"/>
    <property type="match status" value="1"/>
</dbReference>
<dbReference type="HAMAP" id="MF_01855">
    <property type="entry name" value="FBPase_class1"/>
    <property type="match status" value="1"/>
</dbReference>
<dbReference type="InterPro" id="IPR044015">
    <property type="entry name" value="FBPase_C_dom"/>
</dbReference>
<dbReference type="InterPro" id="IPR000146">
    <property type="entry name" value="FBPase_class-1"/>
</dbReference>
<dbReference type="InterPro" id="IPR033391">
    <property type="entry name" value="FBPase_N"/>
</dbReference>
<dbReference type="InterPro" id="IPR028343">
    <property type="entry name" value="FBPtase"/>
</dbReference>
<dbReference type="InterPro" id="IPR020548">
    <property type="entry name" value="Fructose_bisphosphatase_AS"/>
</dbReference>
<dbReference type="NCBIfam" id="NF006778">
    <property type="entry name" value="PRK09293.1-1"/>
    <property type="match status" value="1"/>
</dbReference>
<dbReference type="PANTHER" id="PTHR11556">
    <property type="entry name" value="FRUCTOSE-1,6-BISPHOSPHATASE-RELATED"/>
    <property type="match status" value="1"/>
</dbReference>
<dbReference type="PANTHER" id="PTHR11556:SF35">
    <property type="entry name" value="SEDOHEPTULOSE-1,7-BISPHOSPHATASE, CHLOROPLASTIC"/>
    <property type="match status" value="1"/>
</dbReference>
<dbReference type="Pfam" id="PF00316">
    <property type="entry name" value="FBPase"/>
    <property type="match status" value="1"/>
</dbReference>
<dbReference type="Pfam" id="PF18913">
    <property type="entry name" value="FBPase_C"/>
    <property type="match status" value="1"/>
</dbReference>
<dbReference type="PIRSF" id="PIRSF500210">
    <property type="entry name" value="FBPtase"/>
    <property type="match status" value="1"/>
</dbReference>
<dbReference type="PIRSF" id="PIRSF000904">
    <property type="entry name" value="FBPtase_SBPase"/>
    <property type="match status" value="1"/>
</dbReference>
<dbReference type="PRINTS" id="PR00115">
    <property type="entry name" value="F16BPHPHTASE"/>
</dbReference>
<dbReference type="SUPFAM" id="SSF56655">
    <property type="entry name" value="Carbohydrate phosphatase"/>
    <property type="match status" value="1"/>
</dbReference>
<dbReference type="PROSITE" id="PS00124">
    <property type="entry name" value="FBPASE"/>
    <property type="match status" value="1"/>
</dbReference>
<comment type="catalytic activity">
    <reaction evidence="1">
        <text>beta-D-fructose 1,6-bisphosphate + H2O = beta-D-fructose 6-phosphate + phosphate</text>
        <dbReference type="Rhea" id="RHEA:11064"/>
        <dbReference type="ChEBI" id="CHEBI:15377"/>
        <dbReference type="ChEBI" id="CHEBI:32966"/>
        <dbReference type="ChEBI" id="CHEBI:43474"/>
        <dbReference type="ChEBI" id="CHEBI:57634"/>
        <dbReference type="EC" id="3.1.3.11"/>
    </reaction>
</comment>
<comment type="cofactor">
    <cofactor evidence="1">
        <name>Mg(2+)</name>
        <dbReference type="ChEBI" id="CHEBI:18420"/>
    </cofactor>
    <text evidence="1">Binds 2 magnesium ions per subunit.</text>
</comment>
<comment type="pathway">
    <text evidence="1">Carbohydrate biosynthesis; gluconeogenesis.</text>
</comment>
<comment type="subunit">
    <text evidence="1">Homotetramer.</text>
</comment>
<comment type="subcellular location">
    <subcellularLocation>
        <location evidence="1">Cytoplasm</location>
    </subcellularLocation>
</comment>
<comment type="similarity">
    <text evidence="1">Belongs to the FBPase class 1 family.</text>
</comment>
<feature type="chain" id="PRO_0000364565" description="Fructose-1,6-bisphosphatase class 1">
    <location>
        <begin position="1"/>
        <end position="334"/>
    </location>
</feature>
<feature type="binding site" evidence="1">
    <location>
        <position position="90"/>
    </location>
    <ligand>
        <name>Mg(2+)</name>
        <dbReference type="ChEBI" id="CHEBI:18420"/>
        <label>1</label>
    </ligand>
</feature>
<feature type="binding site" evidence="1">
    <location>
        <position position="113"/>
    </location>
    <ligand>
        <name>Mg(2+)</name>
        <dbReference type="ChEBI" id="CHEBI:18420"/>
        <label>1</label>
    </ligand>
</feature>
<feature type="binding site" evidence="1">
    <location>
        <position position="113"/>
    </location>
    <ligand>
        <name>Mg(2+)</name>
        <dbReference type="ChEBI" id="CHEBI:18420"/>
        <label>2</label>
    </ligand>
</feature>
<feature type="binding site" evidence="1">
    <location>
        <position position="115"/>
    </location>
    <ligand>
        <name>Mg(2+)</name>
        <dbReference type="ChEBI" id="CHEBI:18420"/>
        <label>1</label>
    </ligand>
</feature>
<feature type="binding site" evidence="1">
    <location>
        <begin position="116"/>
        <end position="119"/>
    </location>
    <ligand>
        <name>substrate</name>
    </ligand>
</feature>
<feature type="binding site" evidence="1">
    <location>
        <position position="116"/>
    </location>
    <ligand>
        <name>Mg(2+)</name>
        <dbReference type="ChEBI" id="CHEBI:18420"/>
        <label>2</label>
    </ligand>
</feature>
<feature type="binding site" evidence="1">
    <location>
        <position position="209"/>
    </location>
    <ligand>
        <name>substrate</name>
    </ligand>
</feature>
<feature type="binding site" evidence="1">
    <location>
        <position position="242"/>
    </location>
    <ligand>
        <name>substrate</name>
    </ligand>
</feature>
<feature type="binding site" evidence="1">
    <location>
        <position position="272"/>
    </location>
    <ligand>
        <name>substrate</name>
    </ligand>
</feature>
<feature type="binding site" evidence="1">
    <location>
        <position position="278"/>
    </location>
    <ligand>
        <name>Mg(2+)</name>
        <dbReference type="ChEBI" id="CHEBI:18420"/>
        <label>2</label>
    </ligand>
</feature>
<keyword id="KW-0119">Carbohydrate metabolism</keyword>
<keyword id="KW-0963">Cytoplasm</keyword>
<keyword id="KW-0378">Hydrolase</keyword>
<keyword id="KW-0460">Magnesium</keyword>
<keyword id="KW-0479">Metal-binding</keyword>
<keyword id="KW-1185">Reference proteome</keyword>
<protein>
    <recommendedName>
        <fullName evidence="1">Fructose-1,6-bisphosphatase class 1</fullName>
        <shortName evidence="1">FBPase class 1</shortName>
        <ecNumber evidence="1">3.1.3.11</ecNumber>
    </recommendedName>
    <alternativeName>
        <fullName evidence="1">D-fructose-1,6-bisphosphate 1-phosphohydrolase class 1</fullName>
    </alternativeName>
</protein>
<evidence type="ECO:0000255" key="1">
    <source>
        <dbReference type="HAMAP-Rule" id="MF_01855"/>
    </source>
</evidence>
<gene>
    <name evidence="1" type="primary">fbp</name>
    <name type="ordered locus">HD_0702</name>
</gene>
<name>F16PA_HAEDU</name>
<organism>
    <name type="scientific">Haemophilus ducreyi (strain 35000HP / ATCC 700724)</name>
    <dbReference type="NCBI Taxonomy" id="233412"/>
    <lineage>
        <taxon>Bacteria</taxon>
        <taxon>Pseudomonadati</taxon>
        <taxon>Pseudomonadota</taxon>
        <taxon>Gammaproteobacteria</taxon>
        <taxon>Pasteurellales</taxon>
        <taxon>Pasteurellaceae</taxon>
        <taxon>Haemophilus</taxon>
    </lineage>
</organism>
<reference key="1">
    <citation type="submission" date="2003-06" db="EMBL/GenBank/DDBJ databases">
        <title>The complete genome sequence of Haemophilus ducreyi.</title>
        <authorList>
            <person name="Munson R.S. Jr."/>
            <person name="Ray W.C."/>
            <person name="Mahairas G."/>
            <person name="Sabo P."/>
            <person name="Mungur R."/>
            <person name="Johnson L."/>
            <person name="Nguyen D."/>
            <person name="Wang J."/>
            <person name="Forst C."/>
            <person name="Hood L."/>
        </authorList>
    </citation>
    <scope>NUCLEOTIDE SEQUENCE [LARGE SCALE GENOMIC DNA]</scope>
    <source>
        <strain>35000HP / ATCC 700724</strain>
    </source>
</reference>
<sequence>MKTLGEFIIEKQAEYPEAKGELSGILASIRLAAKIIHREINRAGLSQDILGFAGSENVQGETQMKLDIFANETMKKALLAREDVAGFASEEDDNFIAFDSERNRNAKYILMTDPLDGSSNIDVNVSVGTIFSIYKRISPIGSPVTIEDFLQEGRKQVAAGYVTYGSSTMLVYTTGNGVNGFTYDPSLGLFILSHPDMKMPAEGKYYSINEGQYVTFPLGVKKFIKYCQENDEASKRPYSSRYIGSLVSDFHRNLLKGGIYIYPTSTVYPQGKLRLLYEGNPMAFLAEQADGMATDGFQPILDIKPTELHQRVPFFIGSKTMVKQANTFMQTFTE</sequence>